<protein>
    <recommendedName>
        <fullName evidence="1">ATP-dependent Clp protease ATP-binding subunit ClpX</fullName>
    </recommendedName>
</protein>
<organism>
    <name type="scientific">Wolbachia sp. subsp. Brugia malayi (strain TRS)</name>
    <dbReference type="NCBI Taxonomy" id="292805"/>
    <lineage>
        <taxon>Bacteria</taxon>
        <taxon>Pseudomonadati</taxon>
        <taxon>Pseudomonadota</taxon>
        <taxon>Alphaproteobacteria</taxon>
        <taxon>Rickettsiales</taxon>
        <taxon>Anaplasmataceae</taxon>
        <taxon>Wolbachieae</taxon>
        <taxon>Wolbachia</taxon>
    </lineage>
</organism>
<proteinExistence type="inferred from homology"/>
<evidence type="ECO:0000255" key="1">
    <source>
        <dbReference type="HAMAP-Rule" id="MF_00175"/>
    </source>
</evidence>
<evidence type="ECO:0000255" key="2">
    <source>
        <dbReference type="PROSITE-ProRule" id="PRU01250"/>
    </source>
</evidence>
<sequence length="426" mass="46651">MDNNNDDLHYCSFCNKAQNEVDKLITNSSDGLKVFICNECIELSHKAISQKKGGSFNSDYMSDVKLLLKKPEDIKIFLSKHVVGQEHAQHVLSVAMYNHCQSMAQFNAISDVEIEKSNVMLIGPTGSGKTLLAKTLAKVSDVPFAMADATTLTEAGYVGDDVESVLSRLLQAANYDVAKAQRGIVFIDEIDKITRKSESTSITRDVSGEGVQQALLKIMEGTVAYVPPQGGRKHPQQEFIQVDTNNILFICGGAFEGLNKIIEARKKGTSVGFGADISQSKEQKKKNTLHDVQPEDLIKFGLIPEFVGRVPITAVLDELDHEDLVHVLIEPRNALIKQYKALLAFSKVNLEFSDEAISAIAEKAMSYKTGARMLRAILESLLLDVMYTAGNGGFEGSTIVITKEMVELGKAVINHNNKGNVITVND</sequence>
<dbReference type="EMBL" id="AE017321">
    <property type="protein sequence ID" value="AAW71140.1"/>
    <property type="molecule type" value="Genomic_DNA"/>
</dbReference>
<dbReference type="RefSeq" id="WP_011256750.1">
    <property type="nucleotide sequence ID" value="NC_006833.1"/>
</dbReference>
<dbReference type="SMR" id="Q5GS84"/>
<dbReference type="STRING" id="292805.Wbm0552"/>
<dbReference type="KEGG" id="wbm:Wbm0552"/>
<dbReference type="eggNOG" id="COG1219">
    <property type="taxonomic scope" value="Bacteria"/>
</dbReference>
<dbReference type="HOGENOM" id="CLU_014218_8_2_5"/>
<dbReference type="Proteomes" id="UP000000534">
    <property type="component" value="Chromosome"/>
</dbReference>
<dbReference type="GO" id="GO:0009376">
    <property type="term" value="C:HslUV protease complex"/>
    <property type="evidence" value="ECO:0007669"/>
    <property type="project" value="TreeGrafter"/>
</dbReference>
<dbReference type="GO" id="GO:0005524">
    <property type="term" value="F:ATP binding"/>
    <property type="evidence" value="ECO:0007669"/>
    <property type="project" value="UniProtKB-UniRule"/>
</dbReference>
<dbReference type="GO" id="GO:0016887">
    <property type="term" value="F:ATP hydrolysis activity"/>
    <property type="evidence" value="ECO:0007669"/>
    <property type="project" value="InterPro"/>
</dbReference>
<dbReference type="GO" id="GO:0140662">
    <property type="term" value="F:ATP-dependent protein folding chaperone"/>
    <property type="evidence" value="ECO:0007669"/>
    <property type="project" value="InterPro"/>
</dbReference>
<dbReference type="GO" id="GO:0046983">
    <property type="term" value="F:protein dimerization activity"/>
    <property type="evidence" value="ECO:0007669"/>
    <property type="project" value="InterPro"/>
</dbReference>
<dbReference type="GO" id="GO:0051082">
    <property type="term" value="F:unfolded protein binding"/>
    <property type="evidence" value="ECO:0007669"/>
    <property type="project" value="UniProtKB-UniRule"/>
</dbReference>
<dbReference type="GO" id="GO:0008270">
    <property type="term" value="F:zinc ion binding"/>
    <property type="evidence" value="ECO:0007669"/>
    <property type="project" value="InterPro"/>
</dbReference>
<dbReference type="GO" id="GO:0051301">
    <property type="term" value="P:cell division"/>
    <property type="evidence" value="ECO:0007669"/>
    <property type="project" value="TreeGrafter"/>
</dbReference>
<dbReference type="GO" id="GO:0051603">
    <property type="term" value="P:proteolysis involved in protein catabolic process"/>
    <property type="evidence" value="ECO:0007669"/>
    <property type="project" value="TreeGrafter"/>
</dbReference>
<dbReference type="CDD" id="cd19497">
    <property type="entry name" value="RecA-like_ClpX"/>
    <property type="match status" value="1"/>
</dbReference>
<dbReference type="FunFam" id="1.10.8.60:FF:000002">
    <property type="entry name" value="ATP-dependent Clp protease ATP-binding subunit ClpX"/>
    <property type="match status" value="1"/>
</dbReference>
<dbReference type="FunFam" id="3.40.50.300:FF:000005">
    <property type="entry name" value="ATP-dependent Clp protease ATP-binding subunit ClpX"/>
    <property type="match status" value="1"/>
</dbReference>
<dbReference type="Gene3D" id="1.10.8.60">
    <property type="match status" value="1"/>
</dbReference>
<dbReference type="Gene3D" id="6.20.220.10">
    <property type="entry name" value="ClpX chaperone, C4-type zinc finger domain"/>
    <property type="match status" value="1"/>
</dbReference>
<dbReference type="Gene3D" id="3.40.50.300">
    <property type="entry name" value="P-loop containing nucleotide triphosphate hydrolases"/>
    <property type="match status" value="1"/>
</dbReference>
<dbReference type="HAMAP" id="MF_00175">
    <property type="entry name" value="ClpX"/>
    <property type="match status" value="1"/>
</dbReference>
<dbReference type="InterPro" id="IPR003593">
    <property type="entry name" value="AAA+_ATPase"/>
</dbReference>
<dbReference type="InterPro" id="IPR050052">
    <property type="entry name" value="ATP-dep_Clp_protease_ClpX"/>
</dbReference>
<dbReference type="InterPro" id="IPR003959">
    <property type="entry name" value="ATPase_AAA_core"/>
</dbReference>
<dbReference type="InterPro" id="IPR019489">
    <property type="entry name" value="Clp_ATPase_C"/>
</dbReference>
<dbReference type="InterPro" id="IPR004487">
    <property type="entry name" value="Clp_protease_ATP-bd_su_ClpX"/>
</dbReference>
<dbReference type="InterPro" id="IPR046425">
    <property type="entry name" value="ClpX_bact"/>
</dbReference>
<dbReference type="InterPro" id="IPR027417">
    <property type="entry name" value="P-loop_NTPase"/>
</dbReference>
<dbReference type="InterPro" id="IPR010603">
    <property type="entry name" value="Znf_CppX_C4"/>
</dbReference>
<dbReference type="InterPro" id="IPR038366">
    <property type="entry name" value="Znf_CppX_C4_sf"/>
</dbReference>
<dbReference type="NCBIfam" id="TIGR00382">
    <property type="entry name" value="clpX"/>
    <property type="match status" value="1"/>
</dbReference>
<dbReference type="NCBIfam" id="NF003745">
    <property type="entry name" value="PRK05342.1"/>
    <property type="match status" value="1"/>
</dbReference>
<dbReference type="PANTHER" id="PTHR48102:SF7">
    <property type="entry name" value="ATP-DEPENDENT CLP PROTEASE ATP-BINDING SUBUNIT CLPX-LIKE, MITOCHONDRIAL"/>
    <property type="match status" value="1"/>
</dbReference>
<dbReference type="PANTHER" id="PTHR48102">
    <property type="entry name" value="ATP-DEPENDENT CLP PROTEASE ATP-BINDING SUBUNIT CLPX-LIKE, MITOCHONDRIAL-RELATED"/>
    <property type="match status" value="1"/>
</dbReference>
<dbReference type="Pfam" id="PF07724">
    <property type="entry name" value="AAA_2"/>
    <property type="match status" value="1"/>
</dbReference>
<dbReference type="Pfam" id="PF10431">
    <property type="entry name" value="ClpB_D2-small"/>
    <property type="match status" value="1"/>
</dbReference>
<dbReference type="Pfam" id="PF06689">
    <property type="entry name" value="zf-C4_ClpX"/>
    <property type="match status" value="1"/>
</dbReference>
<dbReference type="SMART" id="SM00382">
    <property type="entry name" value="AAA"/>
    <property type="match status" value="1"/>
</dbReference>
<dbReference type="SMART" id="SM01086">
    <property type="entry name" value="ClpB_D2-small"/>
    <property type="match status" value="1"/>
</dbReference>
<dbReference type="SMART" id="SM00994">
    <property type="entry name" value="zf-C4_ClpX"/>
    <property type="match status" value="1"/>
</dbReference>
<dbReference type="SUPFAM" id="SSF57716">
    <property type="entry name" value="Glucocorticoid receptor-like (DNA-binding domain)"/>
    <property type="match status" value="1"/>
</dbReference>
<dbReference type="SUPFAM" id="SSF52540">
    <property type="entry name" value="P-loop containing nucleoside triphosphate hydrolases"/>
    <property type="match status" value="1"/>
</dbReference>
<dbReference type="PROSITE" id="PS51902">
    <property type="entry name" value="CLPX_ZB"/>
    <property type="match status" value="1"/>
</dbReference>
<keyword id="KW-0067">ATP-binding</keyword>
<keyword id="KW-0143">Chaperone</keyword>
<keyword id="KW-0479">Metal-binding</keyword>
<keyword id="KW-0547">Nucleotide-binding</keyword>
<keyword id="KW-1185">Reference proteome</keyword>
<keyword id="KW-0862">Zinc</keyword>
<feature type="chain" id="PRO_1000024699" description="ATP-dependent Clp protease ATP-binding subunit ClpX">
    <location>
        <begin position="1"/>
        <end position="426"/>
    </location>
</feature>
<feature type="domain" description="ClpX-type ZB" evidence="2">
    <location>
        <begin position="1"/>
        <end position="56"/>
    </location>
</feature>
<feature type="binding site" evidence="2">
    <location>
        <position position="11"/>
    </location>
    <ligand>
        <name>Zn(2+)</name>
        <dbReference type="ChEBI" id="CHEBI:29105"/>
    </ligand>
</feature>
<feature type="binding site" evidence="2">
    <location>
        <position position="14"/>
    </location>
    <ligand>
        <name>Zn(2+)</name>
        <dbReference type="ChEBI" id="CHEBI:29105"/>
    </ligand>
</feature>
<feature type="binding site" evidence="2">
    <location>
        <position position="37"/>
    </location>
    <ligand>
        <name>Zn(2+)</name>
        <dbReference type="ChEBI" id="CHEBI:29105"/>
    </ligand>
</feature>
<feature type="binding site" evidence="2">
    <location>
        <position position="40"/>
    </location>
    <ligand>
        <name>Zn(2+)</name>
        <dbReference type="ChEBI" id="CHEBI:29105"/>
    </ligand>
</feature>
<feature type="binding site" evidence="1">
    <location>
        <begin position="124"/>
        <end position="131"/>
    </location>
    <ligand>
        <name>ATP</name>
        <dbReference type="ChEBI" id="CHEBI:30616"/>
    </ligand>
</feature>
<comment type="function">
    <text evidence="1">ATP-dependent specificity component of the Clp protease. It directs the protease to specific substrates. Can perform chaperone functions in the absence of ClpP.</text>
</comment>
<comment type="subunit">
    <text evidence="1">Component of the ClpX-ClpP complex. Forms a hexameric ring that, in the presence of ATP, binds to fourteen ClpP subunits assembled into a disk-like structure with a central cavity, resembling the structure of eukaryotic proteasomes.</text>
</comment>
<comment type="similarity">
    <text evidence="1">Belongs to the ClpX chaperone family.</text>
</comment>
<name>CLPX_WOLTR</name>
<accession>Q5GS84</accession>
<reference key="1">
    <citation type="journal article" date="2005" name="PLoS Biol.">
        <title>The Wolbachia genome of Brugia malayi: endosymbiont evolution within a human pathogenic nematode.</title>
        <authorList>
            <person name="Foster J."/>
            <person name="Ganatra M."/>
            <person name="Kamal I."/>
            <person name="Ware J."/>
            <person name="Makarova K."/>
            <person name="Ivanova N."/>
            <person name="Bhattacharyya A."/>
            <person name="Kapatral V."/>
            <person name="Kumar S."/>
            <person name="Posfai J."/>
            <person name="Vincze T."/>
            <person name="Ingram J."/>
            <person name="Moran L."/>
            <person name="Lapidus A."/>
            <person name="Omelchenko M."/>
            <person name="Kyrpides N."/>
            <person name="Ghedin E."/>
            <person name="Wang S."/>
            <person name="Goltsman E."/>
            <person name="Joukov V."/>
            <person name="Ostrovskaya O."/>
            <person name="Tsukerman K."/>
            <person name="Mazur M."/>
            <person name="Comb D."/>
            <person name="Koonin E."/>
            <person name="Slatko B."/>
        </authorList>
    </citation>
    <scope>NUCLEOTIDE SEQUENCE [LARGE SCALE GENOMIC DNA]</scope>
    <source>
        <strain>TRS</strain>
    </source>
</reference>
<gene>
    <name evidence="1" type="primary">clpX</name>
    <name type="ordered locus">Wbm0552</name>
</gene>